<accession>O27633</accession>
<keyword id="KW-0328">Glycosyltransferase</keyword>
<keyword id="KW-0660">Purine salvage</keyword>
<keyword id="KW-1185">Reference proteome</keyword>
<keyword id="KW-0808">Transferase</keyword>
<organism>
    <name type="scientific">Methanothermobacter thermautotrophicus (strain ATCC 29096 / DSM 1053 / JCM 10044 / NBRC 100330 / Delta H)</name>
    <name type="common">Methanobacterium thermoautotrophicum</name>
    <dbReference type="NCBI Taxonomy" id="187420"/>
    <lineage>
        <taxon>Archaea</taxon>
        <taxon>Methanobacteriati</taxon>
        <taxon>Methanobacteriota</taxon>
        <taxon>Methanomada group</taxon>
        <taxon>Methanobacteria</taxon>
        <taxon>Methanobacteriales</taxon>
        <taxon>Methanobacteriaceae</taxon>
        <taxon>Methanothermobacter</taxon>
    </lineage>
</organism>
<gene>
    <name type="ordered locus">MTH_1596</name>
</gene>
<proteinExistence type="inferred from homology"/>
<name>MTIP_METTH</name>
<comment type="function">
    <text evidence="1">Catalyzes the reversible phosphorylation of S-methyl-5'-thioinosine (MTI) to hypoxanthine and 5-methylthioribose-1-phosphate. Involved in the breakdown of S-methyl-5'-thioadenosine (MTA), a major by-product of polyamine biosynthesis. Catabolism of (MTA) occurs via deamination to MTI and phosphorolysis to hypoxanthine.</text>
</comment>
<comment type="catalytic activity">
    <reaction evidence="1">
        <text>S-methyl-5'-thioinosine + phosphate = 5-(methylsulfanyl)-alpha-D-ribose 1-phosphate + hypoxanthine</text>
        <dbReference type="Rhea" id="RHEA:30643"/>
        <dbReference type="ChEBI" id="CHEBI:17368"/>
        <dbReference type="ChEBI" id="CHEBI:43474"/>
        <dbReference type="ChEBI" id="CHEBI:48595"/>
        <dbReference type="ChEBI" id="CHEBI:58533"/>
        <dbReference type="EC" id="2.4.2.44"/>
    </reaction>
</comment>
<comment type="pathway">
    <text evidence="1">Purine metabolism; purine nucleoside salvage.</text>
</comment>
<comment type="subunit">
    <text evidence="1">Homotrimer.</text>
</comment>
<comment type="miscellaneous">
    <text evidence="1">Although this enzyme belongs to the family of MTA phosphorylases based on sequence homology, it has been shown that conserved amino acid substitutions in the substrate binding pocket convert the substrate specificity of this enzyme from 6-aminopurines to 6-oxopurines.</text>
</comment>
<comment type="similarity">
    <text evidence="1">Belongs to the PNP/MTAP phosphorylase family. MTAP subfamily.</text>
</comment>
<evidence type="ECO:0000255" key="1">
    <source>
        <dbReference type="HAMAP-Rule" id="MF_01963"/>
    </source>
</evidence>
<sequence length="280" mass="31100">MIGIIGGTGIYEMAEYGRLERRGSLITPYGKTPEISVFKLHGRRVAFIPRHSPGHDKPPHMVNYRANIWALKELGVRQIIATNAVGSLKRSIGPGDFVVPHDFLDFTRSRPSTFYDEKTVHVDMTEPYCRNIRSALSGSSGVVDGGVYVCTEGPRFETPAEIRMFQTLGGTVVGMTGLPEAVLARELEMCYASICLVSNYAASISPSKLTIDEVFEIMDEKKNDLIDIIDAAIRDLKTEQSCPCQHALRGADVNNHEEELYEGFNDICKPEKEEQHHDGP</sequence>
<protein>
    <recommendedName>
        <fullName evidence="1">Probable S-methyl-5'-thioinosine phosphorylase</fullName>
        <ecNumber evidence="1">2.4.2.44</ecNumber>
    </recommendedName>
    <alternativeName>
        <fullName evidence="1">5'-methylthioinosine phosphorylase</fullName>
        <shortName evidence="1">MTI phosphorylase</shortName>
        <shortName evidence="1">MTIP</shortName>
    </alternativeName>
</protein>
<feature type="chain" id="PRO_0000415141" description="Probable S-methyl-5'-thioinosine phosphorylase">
    <location>
        <begin position="1"/>
        <end position="280"/>
    </location>
</feature>
<feature type="binding site" evidence="1">
    <location>
        <position position="8"/>
    </location>
    <ligand>
        <name>phosphate</name>
        <dbReference type="ChEBI" id="CHEBI:43474"/>
    </ligand>
</feature>
<feature type="binding site" evidence="1">
    <location>
        <begin position="50"/>
        <end position="51"/>
    </location>
    <ligand>
        <name>phosphate</name>
        <dbReference type="ChEBI" id="CHEBI:43474"/>
    </ligand>
</feature>
<feature type="binding site" evidence="1">
    <location>
        <position position="175"/>
    </location>
    <ligand>
        <name>substrate</name>
    </ligand>
</feature>
<feature type="binding site" evidence="1">
    <location>
        <position position="176"/>
    </location>
    <ligand>
        <name>phosphate</name>
        <dbReference type="ChEBI" id="CHEBI:43474"/>
    </ligand>
</feature>
<feature type="binding site" evidence="1">
    <location>
        <begin position="199"/>
        <end position="201"/>
    </location>
    <ligand>
        <name>substrate</name>
    </ligand>
</feature>
<feature type="site" description="Important for substrate specificity" evidence="1">
    <location>
        <position position="157"/>
    </location>
</feature>
<feature type="site" description="Important for substrate specificity" evidence="1">
    <location>
        <position position="211"/>
    </location>
</feature>
<dbReference type="EC" id="2.4.2.44" evidence="1"/>
<dbReference type="EMBL" id="AE000666">
    <property type="protein sequence ID" value="AAB86069.1"/>
    <property type="molecule type" value="Genomic_DNA"/>
</dbReference>
<dbReference type="PIR" id="A69080">
    <property type="entry name" value="A69080"/>
</dbReference>
<dbReference type="RefSeq" id="WP_010877204.1">
    <property type="nucleotide sequence ID" value="NC_000916.1"/>
</dbReference>
<dbReference type="SMR" id="O27633"/>
<dbReference type="FunCoup" id="O27633">
    <property type="interactions" value="137"/>
</dbReference>
<dbReference type="STRING" id="187420.MTH_1596"/>
<dbReference type="PaxDb" id="187420-MTH_1596"/>
<dbReference type="EnsemblBacteria" id="AAB86069">
    <property type="protein sequence ID" value="AAB86069"/>
    <property type="gene ID" value="MTH_1596"/>
</dbReference>
<dbReference type="GeneID" id="1471865"/>
<dbReference type="KEGG" id="mth:MTH_1596"/>
<dbReference type="PATRIC" id="fig|187420.15.peg.1559"/>
<dbReference type="HOGENOM" id="CLU_054456_0_2_2"/>
<dbReference type="InParanoid" id="O27633"/>
<dbReference type="UniPathway" id="UPA00606"/>
<dbReference type="Proteomes" id="UP000005223">
    <property type="component" value="Chromosome"/>
</dbReference>
<dbReference type="GO" id="GO:0005829">
    <property type="term" value="C:cytosol"/>
    <property type="evidence" value="ECO:0007669"/>
    <property type="project" value="TreeGrafter"/>
</dbReference>
<dbReference type="GO" id="GO:0017061">
    <property type="term" value="F:S-methyl-5-thioadenosine phosphorylase activity"/>
    <property type="evidence" value="ECO:0007669"/>
    <property type="project" value="InterPro"/>
</dbReference>
<dbReference type="GO" id="GO:0019509">
    <property type="term" value="P:L-methionine salvage from methylthioadenosine"/>
    <property type="evidence" value="ECO:0007669"/>
    <property type="project" value="TreeGrafter"/>
</dbReference>
<dbReference type="GO" id="GO:0006166">
    <property type="term" value="P:purine ribonucleoside salvage"/>
    <property type="evidence" value="ECO:0007669"/>
    <property type="project" value="UniProtKB-UniRule"/>
</dbReference>
<dbReference type="CDD" id="cd09010">
    <property type="entry name" value="MTAP_SsMTAPII_like_MTIP"/>
    <property type="match status" value="1"/>
</dbReference>
<dbReference type="Gene3D" id="3.40.50.1580">
    <property type="entry name" value="Nucleoside phosphorylase domain"/>
    <property type="match status" value="1"/>
</dbReference>
<dbReference type="HAMAP" id="MF_01963">
    <property type="entry name" value="MTAP"/>
    <property type="match status" value="1"/>
</dbReference>
<dbReference type="InterPro" id="IPR010044">
    <property type="entry name" value="MTAP"/>
</dbReference>
<dbReference type="InterPro" id="IPR000845">
    <property type="entry name" value="Nucleoside_phosphorylase_d"/>
</dbReference>
<dbReference type="InterPro" id="IPR035994">
    <property type="entry name" value="Nucleoside_phosphorylase_sf"/>
</dbReference>
<dbReference type="NCBIfam" id="TIGR01694">
    <property type="entry name" value="MTAP"/>
    <property type="match status" value="1"/>
</dbReference>
<dbReference type="NCBIfam" id="NF006599">
    <property type="entry name" value="PRK09136.1"/>
    <property type="match status" value="1"/>
</dbReference>
<dbReference type="PANTHER" id="PTHR42679">
    <property type="entry name" value="S-METHYL-5'-THIOADENOSINE PHOSPHORYLASE"/>
    <property type="match status" value="1"/>
</dbReference>
<dbReference type="PANTHER" id="PTHR42679:SF2">
    <property type="entry name" value="S-METHYL-5'-THIOADENOSINE PHOSPHORYLASE"/>
    <property type="match status" value="1"/>
</dbReference>
<dbReference type="Pfam" id="PF01048">
    <property type="entry name" value="PNP_UDP_1"/>
    <property type="match status" value="1"/>
</dbReference>
<dbReference type="SUPFAM" id="SSF53167">
    <property type="entry name" value="Purine and uridine phosphorylases"/>
    <property type="match status" value="1"/>
</dbReference>
<reference key="1">
    <citation type="journal article" date="1997" name="J. Bacteriol.">
        <title>Complete genome sequence of Methanobacterium thermoautotrophicum deltaH: functional analysis and comparative genomics.</title>
        <authorList>
            <person name="Smith D.R."/>
            <person name="Doucette-Stamm L.A."/>
            <person name="Deloughery C."/>
            <person name="Lee H.-M."/>
            <person name="Dubois J."/>
            <person name="Aldredge T."/>
            <person name="Bashirzadeh R."/>
            <person name="Blakely D."/>
            <person name="Cook R."/>
            <person name="Gilbert K."/>
            <person name="Harrison D."/>
            <person name="Hoang L."/>
            <person name="Keagle P."/>
            <person name="Lumm W."/>
            <person name="Pothier B."/>
            <person name="Qiu D."/>
            <person name="Spadafora R."/>
            <person name="Vicare R."/>
            <person name="Wang Y."/>
            <person name="Wierzbowski J."/>
            <person name="Gibson R."/>
            <person name="Jiwani N."/>
            <person name="Caruso A."/>
            <person name="Bush D."/>
            <person name="Safer H."/>
            <person name="Patwell D."/>
            <person name="Prabhakar S."/>
            <person name="McDougall S."/>
            <person name="Shimer G."/>
            <person name="Goyal A."/>
            <person name="Pietrovski S."/>
            <person name="Church G.M."/>
            <person name="Daniels C.J."/>
            <person name="Mao J.-I."/>
            <person name="Rice P."/>
            <person name="Noelling J."/>
            <person name="Reeve J.N."/>
        </authorList>
    </citation>
    <scope>NUCLEOTIDE SEQUENCE [LARGE SCALE GENOMIC DNA]</scope>
    <source>
        <strain>ATCC 29096 / DSM 1053 / JCM 10044 / NBRC 100330 / Delta H</strain>
    </source>
</reference>